<proteinExistence type="evidence at transcript level"/>
<keyword id="KW-0328">Glycosyltransferase</keyword>
<keyword id="KW-1185">Reference proteome</keyword>
<keyword id="KW-0808">Transferase</keyword>
<sequence length="963" mass="107986">MAGNDNWINSYLDAILDAGKAAIGGDRPSLLLRERGHFSPARYFVEEVITGYDETDLYKTWLRANAMRSPQERNTRLENMTWRIWNLARKKKEFEKEEACRLLKRQPEAEKLRTDTNADMSEDLFEGEKGEDAGDPSVAYGDSTTGSSPKTSSIDKLYIVLISLHGLVRGENMELGRDSDTGGQVKYVVELAKALSSSPGVYRVDLLTRQILAPNFDRSYGEPTEMLVSTSFKNSKQEKGENSGAYIIRIPFGPKDKYLAKEHLWPFIQEFVDGALGHIVRMSKTIGEEIGCGHPVWPAVIHGHYASAGIAAALLSGSLNIPMAFTGHFLGKDKLEGLLKQGRHSREQINMTYKIMCRIEAEELSLDASEIVIASTRQEIEEQWNLYDGFEVILARKLRARVKRGANCYGRYMPRMVIIPPGVEFGHIIHDFEMDGEEENPCPASEDPPIWSQIMRFFTNPRKPMILAVARPYPEKNITSLVKAFGECRPLRELANLTLIMGNREAISKMNNMSAAVLTSVLTLIDEYDLYGQVAYPKHHKHSEVPDIYRLAARTKGAFVNVAYFEQFGVTLIEAAMNGLPIIATKNGAPVEINQVLNNGLLVDPHDQNAIADALYKLLSDKQLWSRCRENGLKNIHQFSWPEHCKNYLSRILTLGPRSPAIGGKQEQKAPISGRKHIIVISVDSVNKEDLVRIIRNTIEVTRTEKMSGSTGFVLSTSLTISEIRSLLVSAGMLPTVFDAFICNSGSNIYYPLYSGDTPSSSQVTPAIDQNHQAHIEYRWGGEGLRKYLVKWATSVVERKGRIERQIIFEDPEHSSTYCLAFRVVNPNHLPPLKELRKLMRIQSLRCNALYNHSATRLSVVPIHASRSQALRYLCIRWGIELPNVAVLVGESGDSDYEELLGGLHRTVILKGEFNIPANRIHTVRRYPLQDVVALDSSNIIGIEGYSTDDMKSALQQIGVLTQ</sequence>
<gene>
    <name type="primary">SPS2</name>
    <name type="ordered locus">Os02g0184400</name>
    <name type="ordered locus">LOC_Os02g09170</name>
    <name type="ORF">OJ1572_F02.13</name>
    <name type="ORF">OsJ_05652</name>
</gene>
<protein>
    <recommendedName>
        <fullName>Probable sucrose-phosphate synthase 2</fullName>
        <ecNumber>2.4.1.14</ecNumber>
    </recommendedName>
    <alternativeName>
        <fullName>Sucrose phosphate synthase 2F</fullName>
        <shortName>OsSPS2F</shortName>
    </alternativeName>
    <alternativeName>
        <fullName>UDP-glucose-fructose-phosphate glucosyltransferase</fullName>
    </alternativeName>
</protein>
<accession>B7F7B9</accession>
<accession>A0A0P0VFM9</accession>
<accession>Q6H881</accession>
<organism>
    <name type="scientific">Oryza sativa subsp. japonica</name>
    <name type="common">Rice</name>
    <dbReference type="NCBI Taxonomy" id="39947"/>
    <lineage>
        <taxon>Eukaryota</taxon>
        <taxon>Viridiplantae</taxon>
        <taxon>Streptophyta</taxon>
        <taxon>Embryophyta</taxon>
        <taxon>Tracheophyta</taxon>
        <taxon>Spermatophyta</taxon>
        <taxon>Magnoliopsida</taxon>
        <taxon>Liliopsida</taxon>
        <taxon>Poales</taxon>
        <taxon>Poaceae</taxon>
        <taxon>BOP clade</taxon>
        <taxon>Oryzoideae</taxon>
        <taxon>Oryzeae</taxon>
        <taxon>Oryzinae</taxon>
        <taxon>Oryza</taxon>
        <taxon>Oryza sativa</taxon>
    </lineage>
</organism>
<feature type="chain" id="PRO_0000413641" description="Probable sucrose-phosphate synthase 2">
    <location>
        <begin position="1"/>
        <end position="963"/>
    </location>
</feature>
<feature type="region of interest" description="Disordered" evidence="2">
    <location>
        <begin position="111"/>
        <end position="150"/>
    </location>
</feature>
<reference key="1">
    <citation type="journal article" date="2005" name="Nature">
        <title>The map-based sequence of the rice genome.</title>
        <authorList>
            <consortium name="International rice genome sequencing project (IRGSP)"/>
        </authorList>
    </citation>
    <scope>NUCLEOTIDE SEQUENCE [LARGE SCALE GENOMIC DNA]</scope>
    <source>
        <strain>cv. Nipponbare</strain>
    </source>
</reference>
<reference key="2">
    <citation type="journal article" date="2008" name="Nucleic Acids Res.">
        <title>The rice annotation project database (RAP-DB): 2008 update.</title>
        <authorList>
            <consortium name="The rice annotation project (RAP)"/>
        </authorList>
    </citation>
    <scope>GENOME REANNOTATION</scope>
    <source>
        <strain>cv. Nipponbare</strain>
    </source>
</reference>
<reference key="3">
    <citation type="journal article" date="2013" name="Rice">
        <title>Improvement of the Oryza sativa Nipponbare reference genome using next generation sequence and optical map data.</title>
        <authorList>
            <person name="Kawahara Y."/>
            <person name="de la Bastide M."/>
            <person name="Hamilton J.P."/>
            <person name="Kanamori H."/>
            <person name="McCombie W.R."/>
            <person name="Ouyang S."/>
            <person name="Schwartz D.C."/>
            <person name="Tanaka T."/>
            <person name="Wu J."/>
            <person name="Zhou S."/>
            <person name="Childs K.L."/>
            <person name="Davidson R.M."/>
            <person name="Lin H."/>
            <person name="Quesada-Ocampo L."/>
            <person name="Vaillancourt B."/>
            <person name="Sakai H."/>
            <person name="Lee S.S."/>
            <person name="Kim J."/>
            <person name="Numa H."/>
            <person name="Itoh T."/>
            <person name="Buell C.R."/>
            <person name="Matsumoto T."/>
        </authorList>
    </citation>
    <scope>GENOME REANNOTATION</scope>
    <source>
        <strain>cv. Nipponbare</strain>
    </source>
</reference>
<reference key="4">
    <citation type="journal article" date="2005" name="PLoS Biol.">
        <title>The genomes of Oryza sativa: a history of duplications.</title>
        <authorList>
            <person name="Yu J."/>
            <person name="Wang J."/>
            <person name="Lin W."/>
            <person name="Li S."/>
            <person name="Li H."/>
            <person name="Zhou J."/>
            <person name="Ni P."/>
            <person name="Dong W."/>
            <person name="Hu S."/>
            <person name="Zeng C."/>
            <person name="Zhang J."/>
            <person name="Zhang Y."/>
            <person name="Li R."/>
            <person name="Xu Z."/>
            <person name="Li S."/>
            <person name="Li X."/>
            <person name="Zheng H."/>
            <person name="Cong L."/>
            <person name="Lin L."/>
            <person name="Yin J."/>
            <person name="Geng J."/>
            <person name="Li G."/>
            <person name="Shi J."/>
            <person name="Liu J."/>
            <person name="Lv H."/>
            <person name="Li J."/>
            <person name="Wang J."/>
            <person name="Deng Y."/>
            <person name="Ran L."/>
            <person name="Shi X."/>
            <person name="Wang X."/>
            <person name="Wu Q."/>
            <person name="Li C."/>
            <person name="Ren X."/>
            <person name="Wang J."/>
            <person name="Wang X."/>
            <person name="Li D."/>
            <person name="Liu D."/>
            <person name="Zhang X."/>
            <person name="Ji Z."/>
            <person name="Zhao W."/>
            <person name="Sun Y."/>
            <person name="Zhang Z."/>
            <person name="Bao J."/>
            <person name="Han Y."/>
            <person name="Dong L."/>
            <person name="Ji J."/>
            <person name="Chen P."/>
            <person name="Wu S."/>
            <person name="Liu J."/>
            <person name="Xiao Y."/>
            <person name="Bu D."/>
            <person name="Tan J."/>
            <person name="Yang L."/>
            <person name="Ye C."/>
            <person name="Zhang J."/>
            <person name="Xu J."/>
            <person name="Zhou Y."/>
            <person name="Yu Y."/>
            <person name="Zhang B."/>
            <person name="Zhuang S."/>
            <person name="Wei H."/>
            <person name="Liu B."/>
            <person name="Lei M."/>
            <person name="Yu H."/>
            <person name="Li Y."/>
            <person name="Xu H."/>
            <person name="Wei S."/>
            <person name="He X."/>
            <person name="Fang L."/>
            <person name="Zhang Z."/>
            <person name="Zhang Y."/>
            <person name="Huang X."/>
            <person name="Su Z."/>
            <person name="Tong W."/>
            <person name="Li J."/>
            <person name="Tong Z."/>
            <person name="Li S."/>
            <person name="Ye J."/>
            <person name="Wang L."/>
            <person name="Fang L."/>
            <person name="Lei T."/>
            <person name="Chen C.-S."/>
            <person name="Chen H.-C."/>
            <person name="Xu Z."/>
            <person name="Li H."/>
            <person name="Huang H."/>
            <person name="Zhang F."/>
            <person name="Xu H."/>
            <person name="Li N."/>
            <person name="Zhao C."/>
            <person name="Li S."/>
            <person name="Dong L."/>
            <person name="Huang Y."/>
            <person name="Li L."/>
            <person name="Xi Y."/>
            <person name="Qi Q."/>
            <person name="Li W."/>
            <person name="Zhang B."/>
            <person name="Hu W."/>
            <person name="Zhang Y."/>
            <person name="Tian X."/>
            <person name="Jiao Y."/>
            <person name="Liang X."/>
            <person name="Jin J."/>
            <person name="Gao L."/>
            <person name="Zheng W."/>
            <person name="Hao B."/>
            <person name="Liu S.-M."/>
            <person name="Wang W."/>
            <person name="Yuan L."/>
            <person name="Cao M."/>
            <person name="McDermott J."/>
            <person name="Samudrala R."/>
            <person name="Wang J."/>
            <person name="Wong G.K.-S."/>
            <person name="Yang H."/>
        </authorList>
    </citation>
    <scope>NUCLEOTIDE SEQUENCE [LARGE SCALE GENOMIC DNA]</scope>
    <source>
        <strain>cv. Nipponbare</strain>
    </source>
</reference>
<reference key="5">
    <citation type="journal article" date="2003" name="Science">
        <title>Collection, mapping, and annotation of over 28,000 cDNA clones from japonica rice.</title>
        <authorList>
            <consortium name="The rice full-length cDNA consortium"/>
        </authorList>
    </citation>
    <scope>NUCLEOTIDE SEQUENCE [LARGE SCALE MRNA]</scope>
    <source>
        <strain>cv. Nipponbare</strain>
    </source>
</reference>
<reference key="6">
    <citation type="journal article" date="2011" name="Plant Sci.">
        <title>Tissue specificity and diurnal change in gene expression of the sucrose phosphate synthase gene family in rice.</title>
        <authorList>
            <person name="Okamura M."/>
            <person name="Aoki N."/>
            <person name="Hirose T."/>
            <person name="Yonekura M."/>
            <person name="Ohto C."/>
            <person name="Ohsugi R."/>
        </authorList>
    </citation>
    <scope>TISSUE SPECIFICITY</scope>
    <scope>DEVELOPMENTAL STAGE</scope>
    <scope>INDUCTION</scope>
</reference>
<name>SPSA2_ORYSJ</name>
<comment type="function">
    <text evidence="1">Plays a role in photosynthetic sucrose synthesis by catalyzing the rate-limiting step of sucrose biosynthesis from UDP-glucose and fructose- 6-phosphate. Involved in the regulation of carbon partitioning in the leaves of plants. May regulate the synthesis of sucrose and therefore play a major role as a limiting factor in the export of photoassimilates out of the leaf. Plays a role for sucrose availability that is essential for plant growth and fiber elongation (By similarity).</text>
</comment>
<comment type="catalytic activity">
    <reaction>
        <text>beta-D-fructose 6-phosphate + UDP-alpha-D-glucose = sucrose 6(F)-phosphate + UDP + H(+)</text>
        <dbReference type="Rhea" id="RHEA:22172"/>
        <dbReference type="ChEBI" id="CHEBI:15378"/>
        <dbReference type="ChEBI" id="CHEBI:57634"/>
        <dbReference type="ChEBI" id="CHEBI:57723"/>
        <dbReference type="ChEBI" id="CHEBI:58223"/>
        <dbReference type="ChEBI" id="CHEBI:58885"/>
        <dbReference type="EC" id="2.4.1.14"/>
    </reaction>
</comment>
<comment type="activity regulation">
    <text evidence="1">Activity is regulated by phosphorylation and moderated by concentration of metabolites and light.</text>
</comment>
<comment type="pathway">
    <text>Glycan biosynthesis; sucrose biosynthesis; sucrose from D-fructose 6-phosphate and UDP-alpha-D-glucose: step 1/2.</text>
</comment>
<comment type="subunit">
    <text evidence="1">Homodimer or homotetramer.</text>
</comment>
<comment type="tissue specificity">
    <text evidence="3">Expressed in germinating seeds.</text>
</comment>
<comment type="developmental stage">
    <text evidence="3">Expressed in source leaves and sink leaves.</text>
</comment>
<comment type="induction">
    <text evidence="3">Circadian-regulated, with the highest expression 1 hour after the beginning of dark period (in 14 hours light/10 hours dark cycle).</text>
</comment>
<comment type="similarity">
    <text evidence="4">Belongs to the glycosyltransferase 1 family.</text>
</comment>
<comment type="sequence caution" evidence="4">
    <conflict type="erroneous initiation">
        <sequence resource="EMBL-CDS" id="BAF08022"/>
    </conflict>
    <text>Extended N-terminus.</text>
</comment>
<comment type="sequence caution" evidence="4">
    <conflict type="erroneous initiation">
        <sequence resource="EMBL-CDS" id="BAH00517"/>
    </conflict>
    <text>Extended N-terminus.</text>
</comment>
<evidence type="ECO:0000250" key="1"/>
<evidence type="ECO:0000256" key="2">
    <source>
        <dbReference type="SAM" id="MobiDB-lite"/>
    </source>
</evidence>
<evidence type="ECO:0000269" key="3">
    <source>
    </source>
</evidence>
<evidence type="ECO:0000305" key="4"/>
<dbReference type="EC" id="2.4.1.14"/>
<dbReference type="EMBL" id="AP004066">
    <property type="protein sequence ID" value="BAD25068.1"/>
    <property type="molecule type" value="Genomic_DNA"/>
</dbReference>
<dbReference type="EMBL" id="AP008208">
    <property type="protein sequence ID" value="BAF08022.2"/>
    <property type="status" value="ALT_INIT"/>
    <property type="molecule type" value="Genomic_DNA"/>
</dbReference>
<dbReference type="EMBL" id="AP014958">
    <property type="protein sequence ID" value="BAS77334.1"/>
    <property type="molecule type" value="Genomic_DNA"/>
</dbReference>
<dbReference type="EMBL" id="CM000139">
    <property type="protein sequence ID" value="EEE56455.1"/>
    <property type="molecule type" value="Genomic_DNA"/>
</dbReference>
<dbReference type="EMBL" id="AK121486">
    <property type="protein sequence ID" value="BAH00517.1"/>
    <property type="status" value="ALT_INIT"/>
    <property type="molecule type" value="mRNA"/>
</dbReference>
<dbReference type="RefSeq" id="XP_015626343.1">
    <property type="nucleotide sequence ID" value="XM_015770857.1"/>
</dbReference>
<dbReference type="SMR" id="B7F7B9"/>
<dbReference type="FunCoup" id="B7F7B9">
    <property type="interactions" value="139"/>
</dbReference>
<dbReference type="STRING" id="39947.B7F7B9"/>
<dbReference type="CAZy" id="GT4">
    <property type="family name" value="Glycosyltransferase Family 4"/>
</dbReference>
<dbReference type="iPTMnet" id="B7F7B9"/>
<dbReference type="PaxDb" id="39947-B7F7B9"/>
<dbReference type="EnsemblPlants" id="Os02t0184400-02">
    <property type="protein sequence ID" value="Os02t0184400-02"/>
    <property type="gene ID" value="Os02g0184400"/>
</dbReference>
<dbReference type="EnsemblPlants" id="Os02t0184400-03">
    <property type="protein sequence ID" value="Os02t0184400-03"/>
    <property type="gene ID" value="Os02g0184400"/>
</dbReference>
<dbReference type="Gramene" id="Os02t0184400-02">
    <property type="protein sequence ID" value="Os02t0184400-02"/>
    <property type="gene ID" value="Os02g0184400"/>
</dbReference>
<dbReference type="Gramene" id="Os02t0184400-03">
    <property type="protein sequence ID" value="Os02t0184400-03"/>
    <property type="gene ID" value="Os02g0184400"/>
</dbReference>
<dbReference type="KEGG" id="dosa:Os02g0184400"/>
<dbReference type="eggNOG" id="KOG0853">
    <property type="taxonomic scope" value="Eukaryota"/>
</dbReference>
<dbReference type="HOGENOM" id="CLU_009583_24_0_1"/>
<dbReference type="InParanoid" id="B7F7B9"/>
<dbReference type="OrthoDB" id="512920at2759"/>
<dbReference type="BRENDA" id="2.4.1.14">
    <property type="organism ID" value="8948"/>
</dbReference>
<dbReference type="PlantReactome" id="R-OSA-1119465">
    <property type="pathway name" value="Sucrose biosynthesis"/>
</dbReference>
<dbReference type="UniPathway" id="UPA00371">
    <property type="reaction ID" value="UER00545"/>
</dbReference>
<dbReference type="Proteomes" id="UP000000763">
    <property type="component" value="Chromosome 2"/>
</dbReference>
<dbReference type="Proteomes" id="UP000007752">
    <property type="component" value="Chromosome 2"/>
</dbReference>
<dbReference type="Proteomes" id="UP000059680">
    <property type="component" value="Chromosome 2"/>
</dbReference>
<dbReference type="ExpressionAtlas" id="B7F7B9">
    <property type="expression patterns" value="baseline and differential"/>
</dbReference>
<dbReference type="GO" id="GO:0046524">
    <property type="term" value="F:sucrose-phosphate synthase activity"/>
    <property type="evidence" value="ECO:0007669"/>
    <property type="project" value="UniProtKB-EC"/>
</dbReference>
<dbReference type="GO" id="GO:0005986">
    <property type="term" value="P:sucrose biosynthetic process"/>
    <property type="evidence" value="ECO:0007669"/>
    <property type="project" value="UniProtKB-UniPathway"/>
</dbReference>
<dbReference type="CDD" id="cd16419">
    <property type="entry name" value="HAD_SPS"/>
    <property type="match status" value="1"/>
</dbReference>
<dbReference type="Gene3D" id="3.90.1070.10">
    <property type="match status" value="1"/>
</dbReference>
<dbReference type="Gene3D" id="3.40.50.2000">
    <property type="entry name" value="Glycogen Phosphorylase B"/>
    <property type="match status" value="2"/>
</dbReference>
<dbReference type="Gene3D" id="3.40.50.1000">
    <property type="entry name" value="HAD superfamily/HAD-like"/>
    <property type="match status" value="1"/>
</dbReference>
<dbReference type="InterPro" id="IPR001296">
    <property type="entry name" value="Glyco_trans_1"/>
</dbReference>
<dbReference type="InterPro" id="IPR023214">
    <property type="entry name" value="HAD_sf"/>
</dbReference>
<dbReference type="InterPro" id="IPR006380">
    <property type="entry name" value="SPP-like_dom"/>
</dbReference>
<dbReference type="InterPro" id="IPR044161">
    <property type="entry name" value="SPS"/>
</dbReference>
<dbReference type="InterPro" id="IPR035659">
    <property type="entry name" value="SPS_C"/>
</dbReference>
<dbReference type="InterPro" id="IPR012819">
    <property type="entry name" value="SPS_pln"/>
</dbReference>
<dbReference type="InterPro" id="IPR000368">
    <property type="entry name" value="Sucrose_synth_GT-B1"/>
</dbReference>
<dbReference type="NCBIfam" id="TIGR02468">
    <property type="entry name" value="sucrsPsyn_pln"/>
    <property type="match status" value="1"/>
</dbReference>
<dbReference type="PANTHER" id="PTHR46039:SF3">
    <property type="entry name" value="SUCROSE-PHOSPHATE SYNTHASE 2-RELATED"/>
    <property type="match status" value="1"/>
</dbReference>
<dbReference type="PANTHER" id="PTHR46039">
    <property type="entry name" value="SUCROSE-PHOSPHATE SYNTHASE 3-RELATED"/>
    <property type="match status" value="1"/>
</dbReference>
<dbReference type="Pfam" id="PF00534">
    <property type="entry name" value="Glycos_transf_1"/>
    <property type="match status" value="1"/>
</dbReference>
<dbReference type="Pfam" id="PF00862">
    <property type="entry name" value="GT-B_Sucrose_synth"/>
    <property type="match status" value="1"/>
</dbReference>
<dbReference type="Pfam" id="PF05116">
    <property type="entry name" value="S6PP"/>
    <property type="match status" value="1"/>
</dbReference>
<dbReference type="SUPFAM" id="SSF53756">
    <property type="entry name" value="UDP-Glycosyltransferase/glycogen phosphorylase"/>
    <property type="match status" value="1"/>
</dbReference>